<proteinExistence type="inferred from homology"/>
<sequence length="84" mass="9342">MAFGAGGGGGGRRPFFRRRKSCPFSGENAPKIDYKDVKLLSRYVSERGKIVPSRITAVSAKKQRELAQAIKRSRFLGLLPYVIK</sequence>
<keyword id="KW-0687">Ribonucleoprotein</keyword>
<keyword id="KW-0689">Ribosomal protein</keyword>
<keyword id="KW-0694">RNA-binding</keyword>
<keyword id="KW-0699">rRNA-binding</keyword>
<protein>
    <recommendedName>
        <fullName evidence="1">Small ribosomal subunit protein bS18</fullName>
    </recommendedName>
    <alternativeName>
        <fullName evidence="2">30S ribosomal protein S18</fullName>
    </alternativeName>
</protein>
<accession>A9W8G3</accession>
<organism>
    <name type="scientific">Methylorubrum extorquens (strain PA1)</name>
    <name type="common">Methylobacterium extorquens</name>
    <dbReference type="NCBI Taxonomy" id="419610"/>
    <lineage>
        <taxon>Bacteria</taxon>
        <taxon>Pseudomonadati</taxon>
        <taxon>Pseudomonadota</taxon>
        <taxon>Alphaproteobacteria</taxon>
        <taxon>Hyphomicrobiales</taxon>
        <taxon>Methylobacteriaceae</taxon>
        <taxon>Methylorubrum</taxon>
    </lineage>
</organism>
<gene>
    <name evidence="1" type="primary">rpsR</name>
    <name type="ordered locus">Mext_3941</name>
</gene>
<evidence type="ECO:0000255" key="1">
    <source>
        <dbReference type="HAMAP-Rule" id="MF_00270"/>
    </source>
</evidence>
<evidence type="ECO:0000305" key="2"/>
<comment type="function">
    <text evidence="1">Binds as a heterodimer with protein bS6 to the central domain of the 16S rRNA, where it helps stabilize the platform of the 30S subunit.</text>
</comment>
<comment type="subunit">
    <text evidence="1">Part of the 30S ribosomal subunit. Forms a tight heterodimer with protein bS6.</text>
</comment>
<comment type="similarity">
    <text evidence="1">Belongs to the bacterial ribosomal protein bS18 family.</text>
</comment>
<feature type="chain" id="PRO_0000345493" description="Small ribosomal subunit protein bS18">
    <location>
        <begin position="1"/>
        <end position="84"/>
    </location>
</feature>
<reference key="1">
    <citation type="submission" date="2007-12" db="EMBL/GenBank/DDBJ databases">
        <title>Complete sequence of Methylobacterium extorquens PA1.</title>
        <authorList>
            <consortium name="US DOE Joint Genome Institute"/>
            <person name="Copeland A."/>
            <person name="Lucas S."/>
            <person name="Lapidus A."/>
            <person name="Barry K."/>
            <person name="Glavina del Rio T."/>
            <person name="Dalin E."/>
            <person name="Tice H."/>
            <person name="Pitluck S."/>
            <person name="Saunders E."/>
            <person name="Brettin T."/>
            <person name="Bruce D."/>
            <person name="Detter J.C."/>
            <person name="Han C."/>
            <person name="Schmutz J."/>
            <person name="Larimer F."/>
            <person name="Land M."/>
            <person name="Hauser L."/>
            <person name="Kyrpides N."/>
            <person name="Kim E."/>
            <person name="Marx C."/>
            <person name="Richardson P."/>
        </authorList>
    </citation>
    <scope>NUCLEOTIDE SEQUENCE [LARGE SCALE GENOMIC DNA]</scope>
    <source>
        <strain>PA1</strain>
    </source>
</reference>
<dbReference type="EMBL" id="CP000908">
    <property type="protein sequence ID" value="ABY32312.1"/>
    <property type="molecule type" value="Genomic_DNA"/>
</dbReference>
<dbReference type="RefSeq" id="WP_004446294.1">
    <property type="nucleotide sequence ID" value="NC_010172.1"/>
</dbReference>
<dbReference type="SMR" id="A9W8G3"/>
<dbReference type="GeneID" id="72991657"/>
<dbReference type="KEGG" id="mex:Mext_3941"/>
<dbReference type="eggNOG" id="COG0238">
    <property type="taxonomic scope" value="Bacteria"/>
</dbReference>
<dbReference type="HOGENOM" id="CLU_148710_2_2_5"/>
<dbReference type="BioCyc" id="MEXT419610:MEXT_RS19785-MONOMER"/>
<dbReference type="GO" id="GO:0022627">
    <property type="term" value="C:cytosolic small ribosomal subunit"/>
    <property type="evidence" value="ECO:0007669"/>
    <property type="project" value="TreeGrafter"/>
</dbReference>
<dbReference type="GO" id="GO:0070181">
    <property type="term" value="F:small ribosomal subunit rRNA binding"/>
    <property type="evidence" value="ECO:0007669"/>
    <property type="project" value="TreeGrafter"/>
</dbReference>
<dbReference type="GO" id="GO:0003735">
    <property type="term" value="F:structural constituent of ribosome"/>
    <property type="evidence" value="ECO:0007669"/>
    <property type="project" value="InterPro"/>
</dbReference>
<dbReference type="GO" id="GO:0006412">
    <property type="term" value="P:translation"/>
    <property type="evidence" value="ECO:0007669"/>
    <property type="project" value="UniProtKB-UniRule"/>
</dbReference>
<dbReference type="FunFam" id="4.10.640.10:FF:000006">
    <property type="entry name" value="30S ribosomal protein S18"/>
    <property type="match status" value="1"/>
</dbReference>
<dbReference type="Gene3D" id="4.10.640.10">
    <property type="entry name" value="Ribosomal protein S18"/>
    <property type="match status" value="1"/>
</dbReference>
<dbReference type="HAMAP" id="MF_00270">
    <property type="entry name" value="Ribosomal_bS18"/>
    <property type="match status" value="1"/>
</dbReference>
<dbReference type="InterPro" id="IPR001648">
    <property type="entry name" value="Ribosomal_bS18"/>
</dbReference>
<dbReference type="InterPro" id="IPR018275">
    <property type="entry name" value="Ribosomal_bS18_CS"/>
</dbReference>
<dbReference type="InterPro" id="IPR036870">
    <property type="entry name" value="Ribosomal_bS18_sf"/>
</dbReference>
<dbReference type="NCBIfam" id="TIGR00165">
    <property type="entry name" value="S18"/>
    <property type="match status" value="1"/>
</dbReference>
<dbReference type="PANTHER" id="PTHR13479">
    <property type="entry name" value="30S RIBOSOMAL PROTEIN S18"/>
    <property type="match status" value="1"/>
</dbReference>
<dbReference type="PANTHER" id="PTHR13479:SF40">
    <property type="entry name" value="SMALL RIBOSOMAL SUBUNIT PROTEIN BS18M"/>
    <property type="match status" value="1"/>
</dbReference>
<dbReference type="Pfam" id="PF01084">
    <property type="entry name" value="Ribosomal_S18"/>
    <property type="match status" value="1"/>
</dbReference>
<dbReference type="PRINTS" id="PR00974">
    <property type="entry name" value="RIBOSOMALS18"/>
</dbReference>
<dbReference type="SUPFAM" id="SSF46911">
    <property type="entry name" value="Ribosomal protein S18"/>
    <property type="match status" value="1"/>
</dbReference>
<dbReference type="PROSITE" id="PS00057">
    <property type="entry name" value="RIBOSOMAL_S18"/>
    <property type="match status" value="1"/>
</dbReference>
<name>RS18_METEP</name>